<feature type="chain" id="PRO_1000192687" description="ATP-dependent protease subunit HslV">
    <location>
        <begin position="1"/>
        <end position="176"/>
    </location>
</feature>
<feature type="active site" evidence="1">
    <location>
        <position position="6"/>
    </location>
</feature>
<feature type="binding site" evidence="1">
    <location>
        <position position="161"/>
    </location>
    <ligand>
        <name>Na(+)</name>
        <dbReference type="ChEBI" id="CHEBI:29101"/>
    </ligand>
</feature>
<feature type="binding site" evidence="1">
    <location>
        <position position="164"/>
    </location>
    <ligand>
        <name>Na(+)</name>
        <dbReference type="ChEBI" id="CHEBI:29101"/>
    </ligand>
</feature>
<feature type="binding site" evidence="1">
    <location>
        <position position="167"/>
    </location>
    <ligand>
        <name>Na(+)</name>
        <dbReference type="ChEBI" id="CHEBI:29101"/>
    </ligand>
</feature>
<organism>
    <name type="scientific">Thermosipho africanus (strain TCF52B)</name>
    <dbReference type="NCBI Taxonomy" id="484019"/>
    <lineage>
        <taxon>Bacteria</taxon>
        <taxon>Thermotogati</taxon>
        <taxon>Thermotogota</taxon>
        <taxon>Thermotogae</taxon>
        <taxon>Thermotogales</taxon>
        <taxon>Fervidobacteriaceae</taxon>
        <taxon>Thermosipho</taxon>
    </lineage>
</organism>
<accession>B7IFU1</accession>
<protein>
    <recommendedName>
        <fullName evidence="1">ATP-dependent protease subunit HslV</fullName>
        <ecNumber evidence="1">3.4.25.2</ecNumber>
    </recommendedName>
</protein>
<keyword id="KW-0021">Allosteric enzyme</keyword>
<keyword id="KW-0963">Cytoplasm</keyword>
<keyword id="KW-0378">Hydrolase</keyword>
<keyword id="KW-0479">Metal-binding</keyword>
<keyword id="KW-0645">Protease</keyword>
<keyword id="KW-1185">Reference proteome</keyword>
<keyword id="KW-0915">Sodium</keyword>
<keyword id="KW-0346">Stress response</keyword>
<keyword id="KW-0888">Threonine protease</keyword>
<gene>
    <name evidence="1" type="primary">hslV</name>
    <name type="ordered locus">THA_464</name>
</gene>
<reference key="1">
    <citation type="journal article" date="2009" name="J. Bacteriol.">
        <title>The genome of Thermosipho africanus TCF52B: lateral genetic connections to the Firmicutes and Archaea.</title>
        <authorList>
            <person name="Nesboe C.L."/>
            <person name="Bapteste E."/>
            <person name="Curtis B."/>
            <person name="Dahle H."/>
            <person name="Lopez P."/>
            <person name="Macleod D."/>
            <person name="Dlutek M."/>
            <person name="Bowman S."/>
            <person name="Zhaxybayeva O."/>
            <person name="Birkeland N.-K."/>
            <person name="Doolittle W.F."/>
        </authorList>
    </citation>
    <scope>NUCLEOTIDE SEQUENCE [LARGE SCALE GENOMIC DNA]</scope>
    <source>
        <strain>TCF52B</strain>
    </source>
</reference>
<proteinExistence type="inferred from homology"/>
<name>HSLV_THEAB</name>
<comment type="function">
    <text evidence="1">Protease subunit of a proteasome-like degradation complex believed to be a general protein degrading machinery.</text>
</comment>
<comment type="catalytic activity">
    <reaction evidence="1">
        <text>ATP-dependent cleavage of peptide bonds with broad specificity.</text>
        <dbReference type="EC" id="3.4.25.2"/>
    </reaction>
</comment>
<comment type="activity regulation">
    <text evidence="1">Allosterically activated by HslU binding.</text>
</comment>
<comment type="subunit">
    <text evidence="1">A double ring-shaped homohexamer of HslV is capped on each side by a ring-shaped HslU homohexamer. The assembly of the HslU/HslV complex is dependent on binding of ATP.</text>
</comment>
<comment type="subcellular location">
    <subcellularLocation>
        <location evidence="1">Cytoplasm</location>
    </subcellularLocation>
</comment>
<comment type="similarity">
    <text evidence="1">Belongs to the peptidase T1B family. HslV subfamily.</text>
</comment>
<dbReference type="EC" id="3.4.25.2" evidence="1"/>
<dbReference type="EMBL" id="CP001185">
    <property type="protein sequence ID" value="ACJ74955.1"/>
    <property type="molecule type" value="Genomic_DNA"/>
</dbReference>
<dbReference type="RefSeq" id="WP_004104244.1">
    <property type="nucleotide sequence ID" value="NC_011653.1"/>
</dbReference>
<dbReference type="SMR" id="B7IFU1"/>
<dbReference type="STRING" id="484019.THA_464"/>
<dbReference type="MEROPS" id="T01.006"/>
<dbReference type="KEGG" id="taf:THA_464"/>
<dbReference type="eggNOG" id="COG5405">
    <property type="taxonomic scope" value="Bacteria"/>
</dbReference>
<dbReference type="HOGENOM" id="CLU_093872_1_0_0"/>
<dbReference type="OrthoDB" id="9804884at2"/>
<dbReference type="Proteomes" id="UP000002453">
    <property type="component" value="Chromosome"/>
</dbReference>
<dbReference type="GO" id="GO:0009376">
    <property type="term" value="C:HslUV protease complex"/>
    <property type="evidence" value="ECO:0007669"/>
    <property type="project" value="UniProtKB-UniRule"/>
</dbReference>
<dbReference type="GO" id="GO:0005839">
    <property type="term" value="C:proteasome core complex"/>
    <property type="evidence" value="ECO:0007669"/>
    <property type="project" value="InterPro"/>
</dbReference>
<dbReference type="GO" id="GO:0046872">
    <property type="term" value="F:metal ion binding"/>
    <property type="evidence" value="ECO:0007669"/>
    <property type="project" value="UniProtKB-KW"/>
</dbReference>
<dbReference type="GO" id="GO:0004298">
    <property type="term" value="F:threonine-type endopeptidase activity"/>
    <property type="evidence" value="ECO:0007669"/>
    <property type="project" value="UniProtKB-KW"/>
</dbReference>
<dbReference type="GO" id="GO:0051603">
    <property type="term" value="P:proteolysis involved in protein catabolic process"/>
    <property type="evidence" value="ECO:0007669"/>
    <property type="project" value="InterPro"/>
</dbReference>
<dbReference type="CDD" id="cd01913">
    <property type="entry name" value="protease_HslV"/>
    <property type="match status" value="1"/>
</dbReference>
<dbReference type="Gene3D" id="3.60.20.10">
    <property type="entry name" value="Glutamine Phosphoribosylpyrophosphate, subunit 1, domain 1"/>
    <property type="match status" value="1"/>
</dbReference>
<dbReference type="HAMAP" id="MF_00248">
    <property type="entry name" value="HslV"/>
    <property type="match status" value="1"/>
</dbReference>
<dbReference type="InterPro" id="IPR022281">
    <property type="entry name" value="ATP-dep_Prtase_HsIV_su"/>
</dbReference>
<dbReference type="InterPro" id="IPR029055">
    <property type="entry name" value="Ntn_hydrolases_N"/>
</dbReference>
<dbReference type="InterPro" id="IPR001353">
    <property type="entry name" value="Proteasome_sua/b"/>
</dbReference>
<dbReference type="InterPro" id="IPR023333">
    <property type="entry name" value="Proteasome_suB-type"/>
</dbReference>
<dbReference type="NCBIfam" id="TIGR03692">
    <property type="entry name" value="ATP_dep_HslV"/>
    <property type="match status" value="1"/>
</dbReference>
<dbReference type="NCBIfam" id="NF003964">
    <property type="entry name" value="PRK05456.1"/>
    <property type="match status" value="1"/>
</dbReference>
<dbReference type="PANTHER" id="PTHR32194:SF0">
    <property type="entry name" value="ATP-DEPENDENT PROTEASE SUBUNIT HSLV"/>
    <property type="match status" value="1"/>
</dbReference>
<dbReference type="PANTHER" id="PTHR32194">
    <property type="entry name" value="METALLOPROTEASE TLDD"/>
    <property type="match status" value="1"/>
</dbReference>
<dbReference type="Pfam" id="PF00227">
    <property type="entry name" value="Proteasome"/>
    <property type="match status" value="1"/>
</dbReference>
<dbReference type="PIRSF" id="PIRSF039093">
    <property type="entry name" value="HslV"/>
    <property type="match status" value="1"/>
</dbReference>
<dbReference type="SUPFAM" id="SSF56235">
    <property type="entry name" value="N-terminal nucleophile aminohydrolases (Ntn hydrolases)"/>
    <property type="match status" value="1"/>
</dbReference>
<dbReference type="PROSITE" id="PS51476">
    <property type="entry name" value="PROTEASOME_BETA_2"/>
    <property type="match status" value="1"/>
</dbReference>
<evidence type="ECO:0000255" key="1">
    <source>
        <dbReference type="HAMAP-Rule" id="MF_00248"/>
    </source>
</evidence>
<sequence>MKWRSTTVVCVRRNDSVVMISDGQVTYGNTILKGNAKKVRKMGDGNVLAGFAGSVADAMALFDRFEAKYREWGGNLLKAAVELAKDWRTDRVLRRLEAMLLVADKKYTFIVSGTGEVIQPEDDIASIGSGSPYAIAAGKALLRHTDLSAKEIALEAIKIASEICIYTNDNFTIEEL</sequence>